<protein>
    <recommendedName>
        <fullName evidence="4">O-methyltransferase desB</fullName>
        <ecNumber evidence="6">2.1.1.-</ecNumber>
    </recommendedName>
    <alternativeName>
        <fullName evidence="4">Desertorin biosynthesis cluster protein B</fullName>
    </alternativeName>
</protein>
<gene>
    <name evidence="4" type="primary">desB</name>
    <name evidence="4" type="ORF">EMD_0003</name>
</gene>
<proteinExistence type="inferred from homology"/>
<evidence type="ECO:0000250" key="1">
    <source>
        <dbReference type="UniProtKB" id="O04385"/>
    </source>
</evidence>
<evidence type="ECO:0000255" key="2">
    <source>
        <dbReference type="PROSITE-ProRule" id="PRU01020"/>
    </source>
</evidence>
<evidence type="ECO:0000269" key="3">
    <source>
    </source>
</evidence>
<evidence type="ECO:0000303" key="4">
    <source>
    </source>
</evidence>
<evidence type="ECO:0000305" key="5"/>
<evidence type="ECO:0000305" key="6">
    <source>
    </source>
</evidence>
<dbReference type="EC" id="2.1.1.-" evidence="6"/>
<dbReference type="EMBL" id="KT583602">
    <property type="protein sequence ID" value="ALG03238.1"/>
    <property type="molecule type" value="Genomic_DNA"/>
</dbReference>
<dbReference type="SMR" id="A0A0N9HN32"/>
<dbReference type="GO" id="GO:0008171">
    <property type="term" value="F:O-methyltransferase activity"/>
    <property type="evidence" value="ECO:0007669"/>
    <property type="project" value="InterPro"/>
</dbReference>
<dbReference type="GO" id="GO:0046983">
    <property type="term" value="F:protein dimerization activity"/>
    <property type="evidence" value="ECO:0007669"/>
    <property type="project" value="InterPro"/>
</dbReference>
<dbReference type="GO" id="GO:0032259">
    <property type="term" value="P:methylation"/>
    <property type="evidence" value="ECO:0007669"/>
    <property type="project" value="UniProtKB-KW"/>
</dbReference>
<dbReference type="GO" id="GO:0044550">
    <property type="term" value="P:secondary metabolite biosynthetic process"/>
    <property type="evidence" value="ECO:0007669"/>
    <property type="project" value="UniProtKB-ARBA"/>
</dbReference>
<dbReference type="Gene3D" id="3.40.50.150">
    <property type="entry name" value="Vaccinia Virus protein VP39"/>
    <property type="match status" value="1"/>
</dbReference>
<dbReference type="Gene3D" id="1.10.10.10">
    <property type="entry name" value="Winged helix-like DNA-binding domain superfamily/Winged helix DNA-binding domain"/>
    <property type="match status" value="1"/>
</dbReference>
<dbReference type="InterPro" id="IPR016461">
    <property type="entry name" value="COMT-like"/>
</dbReference>
<dbReference type="InterPro" id="IPR001077">
    <property type="entry name" value="O_MeTrfase_dom"/>
</dbReference>
<dbReference type="InterPro" id="IPR012967">
    <property type="entry name" value="Plant_O-MeTrfase_dimerisation"/>
</dbReference>
<dbReference type="InterPro" id="IPR029063">
    <property type="entry name" value="SAM-dependent_MTases_sf"/>
</dbReference>
<dbReference type="InterPro" id="IPR036388">
    <property type="entry name" value="WH-like_DNA-bd_sf"/>
</dbReference>
<dbReference type="InterPro" id="IPR036390">
    <property type="entry name" value="WH_DNA-bd_sf"/>
</dbReference>
<dbReference type="PANTHER" id="PTHR43712:SF1">
    <property type="entry name" value="HYPOTHETICAL O-METHYLTRANSFERASE (EUROFUNG)-RELATED"/>
    <property type="match status" value="1"/>
</dbReference>
<dbReference type="PANTHER" id="PTHR43712">
    <property type="entry name" value="PUTATIVE (AFU_ORTHOLOGUE AFUA_4G14580)-RELATED"/>
    <property type="match status" value="1"/>
</dbReference>
<dbReference type="Pfam" id="PF08100">
    <property type="entry name" value="Dimerisation"/>
    <property type="match status" value="1"/>
</dbReference>
<dbReference type="Pfam" id="PF00891">
    <property type="entry name" value="Methyltransf_2"/>
    <property type="match status" value="1"/>
</dbReference>
<dbReference type="SUPFAM" id="SSF53335">
    <property type="entry name" value="S-adenosyl-L-methionine-dependent methyltransferases"/>
    <property type="match status" value="1"/>
</dbReference>
<dbReference type="SUPFAM" id="SSF46785">
    <property type="entry name" value="Winged helix' DNA-binding domain"/>
    <property type="match status" value="1"/>
</dbReference>
<dbReference type="PROSITE" id="PS51683">
    <property type="entry name" value="SAM_OMT_II"/>
    <property type="match status" value="1"/>
</dbReference>
<sequence length="419" mass="46180">MGTETEYLQSIQQALKSLTTAANNCQLTYTHAVGQDVHSLCAREAVRKTLVLEAYKFLQIAQGPVDAAVTCFEQTAHLASVRALLEAGVFEVLPTDGTPRTMKEVAEKLDVDESLLARLMRHASLYGPLEETGPGSYRHTPFSLVYLRPEIRGMVRFAMDEHMPAHLKLHEYLQQTSWTAPSSSTNNPYTHAHSITGTSMFANLSAPSNKHRLDAFNDAMTVQATTAIWMIDLFPFHEVLSPSASADTVLAVDIGGGTGRAISRIRSLAGNLPGRYILQDQAHVISNLPSPSPSSYLDGIETMTHDFFTPQPVAGAQIYLIRRCLHNWPEESVIRILRNIVPAMARTNSRLLIEEIIVPESNSGIEEGWMDMIMMALGAKQRTLEEWKGVLGTAGLEVVTVYRVDGICHGLIEARVKSE</sequence>
<organism>
    <name type="scientific">Aspergillus desertorum</name>
    <name type="common">Emericella desertorum</name>
    <dbReference type="NCBI Taxonomy" id="1810909"/>
    <lineage>
        <taxon>Eukaryota</taxon>
        <taxon>Fungi</taxon>
        <taxon>Dikarya</taxon>
        <taxon>Ascomycota</taxon>
        <taxon>Pezizomycotina</taxon>
        <taxon>Eurotiomycetes</taxon>
        <taxon>Eurotiomycetidae</taxon>
        <taxon>Eurotiales</taxon>
        <taxon>Aspergillaceae</taxon>
        <taxon>Aspergillus</taxon>
        <taxon>Aspergillus subgen. Nidulantes</taxon>
    </lineage>
</organism>
<keyword id="KW-0489">Methyltransferase</keyword>
<keyword id="KW-0949">S-adenosyl-L-methionine</keyword>
<keyword id="KW-0808">Transferase</keyword>
<comment type="function">
    <text evidence="3">Non-reducing polyketide synthase; part of the gene cluster that mediates the biosynthesis of the bicoumarin desertorin (PubMed:26389790). The non-reducing polyketide synthase desS first catalyzes the formation of the pentaketidic 4,7-dihydroxy-5-methylcoumarin from acetyl coenzyme A and 4 malonyl coenzyme A molecules (PubMed:26389790). Further O-methylation by desB leads to the formation of 7-demethylsiderin (PubMed:26389790). Then, an oxidative phenol coupling catalyzed by the cytochrome P450 monooxygenase desC forms the 6,8'-dimer M-desertorin A via dimerization the monomeric precursor, 7-demethylsiderin (PubMed:26389790). M-desertorin A is further converted to M-desertorin C (PubMed:26389790).</text>
</comment>
<comment type="cofactor">
    <cofactor evidence="5">
        <name>S-adenosyl-L-methionine</name>
        <dbReference type="ChEBI" id="CHEBI:59789"/>
    </cofactor>
</comment>
<comment type="pathway">
    <text evidence="6">Secondary metabolite biosynthesis.</text>
</comment>
<comment type="similarity">
    <text evidence="2">Belongs to the class I-like SAM-binding methyltransferase superfamily. Cation-independent O-methyltransferase family.</text>
</comment>
<reference key="1">
    <citation type="journal article" date="2015" name="J. Am. Chem. Soc.">
        <title>Cytochrome P450-catalyzed regio- and stereoselective phenol coupling of fungal natural products.</title>
        <authorList>
            <person name="Mazzaferro L.S."/>
            <person name="Huettel W."/>
            <person name="Fries A."/>
            <person name="Mueller M."/>
        </authorList>
    </citation>
    <scope>NUCLEOTIDE SEQUENCE [GENOMIC DNA]</scope>
    <scope>FUNCTION</scope>
    <scope>PATHWAY</scope>
    <source>
        <strain>CBS 653.73 / NBRC 30840</strain>
    </source>
</reference>
<accession>A0A0N9HN32</accession>
<feature type="chain" id="PRO_0000442167" description="O-methyltransferase desB">
    <location>
        <begin position="1"/>
        <end position="419"/>
    </location>
</feature>
<feature type="active site" description="Proton acceptor" evidence="2">
    <location>
        <position position="326"/>
    </location>
</feature>
<feature type="binding site" evidence="1">
    <location>
        <begin position="255"/>
        <end position="256"/>
    </location>
    <ligand>
        <name>S-adenosyl-L-methionine</name>
        <dbReference type="ChEBI" id="CHEBI:59789"/>
    </ligand>
</feature>
<feature type="binding site" evidence="2">
    <location>
        <position position="280"/>
    </location>
    <ligand>
        <name>S-adenosyl-L-methionine</name>
        <dbReference type="ChEBI" id="CHEBI:59789"/>
    </ligand>
</feature>
<feature type="binding site" evidence="1">
    <location>
        <begin position="306"/>
        <end position="307"/>
    </location>
    <ligand>
        <name>S-adenosyl-L-methionine</name>
        <dbReference type="ChEBI" id="CHEBI:59789"/>
    </ligand>
</feature>
<feature type="binding site" evidence="2">
    <location>
        <position position="323"/>
    </location>
    <ligand>
        <name>S-adenosyl-L-methionine</name>
        <dbReference type="ChEBI" id="CHEBI:59789"/>
    </ligand>
</feature>
<name>DESB_ASPDE</name>